<evidence type="ECO:0000250" key="1"/>
<evidence type="ECO:0000250" key="2">
    <source>
        <dbReference type="UniProtKB" id="P68831"/>
    </source>
</evidence>
<evidence type="ECO:0000256" key="3">
    <source>
        <dbReference type="SAM" id="MobiDB-lite"/>
    </source>
</evidence>
<evidence type="ECO:0000305" key="4"/>
<gene>
    <name type="primary">B2</name>
</gene>
<feature type="chain" id="PRO_0000223689" description="Protein B2">
    <location>
        <begin position="1"/>
        <end position="106"/>
    </location>
</feature>
<feature type="region of interest" description="RNA-binding" evidence="1">
    <location>
        <begin position="1"/>
        <end position="73"/>
    </location>
</feature>
<feature type="region of interest" description="Disordered" evidence="3">
    <location>
        <begin position="85"/>
        <end position="106"/>
    </location>
</feature>
<dbReference type="EMBL" id="AF329080">
    <property type="protein sequence ID" value="AAK15752.1"/>
    <property type="molecule type" value="Genomic_RNA"/>
</dbReference>
<dbReference type="RefSeq" id="NP_689440.1">
    <property type="nucleotide sequence ID" value="NC_004142.1"/>
</dbReference>
<dbReference type="SMR" id="Q992I9"/>
<dbReference type="KEGG" id="vg:956657"/>
<dbReference type="OrthoDB" id="24098at10239"/>
<dbReference type="Proteomes" id="UP000204043">
    <property type="component" value="Genome"/>
</dbReference>
<dbReference type="GO" id="GO:0033650">
    <property type="term" value="C:host cell mitochondrion"/>
    <property type="evidence" value="ECO:0007669"/>
    <property type="project" value="UniProtKB-SubCell"/>
</dbReference>
<dbReference type="GO" id="GO:0003723">
    <property type="term" value="F:RNA binding"/>
    <property type="evidence" value="ECO:0007669"/>
    <property type="project" value="UniProtKB-KW"/>
</dbReference>
<dbReference type="GO" id="GO:0052170">
    <property type="term" value="P:symbiont-mediated suppression of host innate immune response"/>
    <property type="evidence" value="ECO:0007669"/>
    <property type="project" value="UniProtKB-KW"/>
</dbReference>
<dbReference type="Gene3D" id="1.10.287.1060">
    <property type="entry name" value="ESAT-6-like"/>
    <property type="match status" value="1"/>
</dbReference>
<dbReference type="InterPro" id="IPR024377">
    <property type="entry name" value="RNA-bd_B2"/>
</dbReference>
<dbReference type="InterPro" id="IPR037209">
    <property type="entry name" value="RNA-bd_B2_sf"/>
</dbReference>
<dbReference type="Pfam" id="PF11473">
    <property type="entry name" value="B2"/>
    <property type="match status" value="1"/>
</dbReference>
<dbReference type="SUPFAM" id="SSF140506">
    <property type="entry name" value="FHV B2 protein-like"/>
    <property type="match status" value="1"/>
</dbReference>
<reference key="1">
    <citation type="submission" date="2000-12" db="EMBL/GenBank/DDBJ databases">
        <authorList>
            <person name="Dasgupta R."/>
            <person name="Ye B."/>
            <person name="Harper T.A."/>
        </authorList>
    </citation>
    <scope>NUCLEOTIDE SEQUENCE [GENOMIC RNA]</scope>
</reference>
<organism>
    <name type="scientific">Boolarra virus</name>
    <name type="common">BoV</name>
    <dbReference type="NCBI Taxonomy" id="12286"/>
    <lineage>
        <taxon>Viruses</taxon>
        <taxon>Riboviria</taxon>
        <taxon>Orthornavirae</taxon>
        <taxon>Kitrinoviricota</taxon>
        <taxon>Magsaviricetes</taxon>
        <taxon>Nodamuvirales</taxon>
        <taxon>Nodaviridae</taxon>
        <taxon>Alphanodavirus</taxon>
    </lineage>
</organism>
<keyword id="KW-1045">Host mitochondrion</keyword>
<keyword id="KW-0945">Host-virus interaction</keyword>
<keyword id="KW-1090">Inhibition of host innate immune response by virus</keyword>
<keyword id="KW-0694">RNA-binding</keyword>
<keyword id="KW-0941">Suppressor of RNA silencing</keyword>
<keyword id="KW-0899">Viral immunoevasion</keyword>
<accession>Q992I9</accession>
<name>B2_BOOLV</name>
<comment type="function">
    <text evidence="2">Binds double-strand RNA (dsRNA) with high affinity. Suppresses the host RNA silencing-based antiviral response.</text>
</comment>
<comment type="subunit">
    <text evidence="2">Homodimer. Interacts with RNA-directed RNA polymerase.</text>
</comment>
<comment type="subcellular location">
    <subcellularLocation>
        <location evidence="2">Host mitochondrion</location>
    </subcellularLocation>
</comment>
<comment type="developmental stage">
    <text>Expressed at high levels early in the viral replication cycle.</text>
</comment>
<comment type="domain">
    <text evidence="2">The dsRNA-binding region is required for suppression of RNA silencing. The N-terminus is involved in homodimerization. The alpha2 helices of the dimer bind parallel to the stem of the dsRNA helix.</text>
</comment>
<comment type="miscellaneous">
    <text>Encoded on a subgenomic RNA (RNA3) synthesized during replication and which is co-terminal with RNA1.</text>
</comment>
<comment type="similarity">
    <text evidence="4">Belongs to the nodaviridae B2 protein family.</text>
</comment>
<protein>
    <recommendedName>
        <fullName>Protein B2</fullName>
    </recommendedName>
</protein>
<proteinExistence type="evidence at transcript level"/>
<organismHost>
    <name type="scientific">Hepialidae</name>
    <name type="common">ghost moths</name>
    <dbReference type="NCBI Taxonomy" id="41021"/>
</organismHost>
<sequence>MQSKLALIQELPDRIQKAVEVVLAMSYQEAPNNVRRDLDNLQACLNKAKQTVNRMVTSLLDKPSMAAYLEGKPLPEERPTLEERLRKLELSREPPPTRSDPAPAKL</sequence>